<reference key="1">
    <citation type="journal article" date="2002" name="Proc. Natl. Acad. Sci. U.S.A.">
        <title>Complete genome sequence of Clostridium perfringens, an anaerobic flesh-eater.</title>
        <authorList>
            <person name="Shimizu T."/>
            <person name="Ohtani K."/>
            <person name="Hirakawa H."/>
            <person name="Ohshima K."/>
            <person name="Yamashita A."/>
            <person name="Shiba T."/>
            <person name="Ogasawara N."/>
            <person name="Hattori M."/>
            <person name="Kuhara S."/>
            <person name="Hayashi H."/>
        </authorList>
    </citation>
    <scope>NUCLEOTIDE SEQUENCE [LARGE SCALE GENOMIC DNA]</scope>
    <source>
        <strain>13 / Type A</strain>
    </source>
</reference>
<protein>
    <recommendedName>
        <fullName evidence="1">UDP-N-acetylmuramoyl-L-alanyl-D-glutamate--2,6-diaminopimelate ligase</fullName>
        <ecNumber evidence="1">6.3.2.13</ecNumber>
    </recommendedName>
    <alternativeName>
        <fullName evidence="1">Meso-A2pm-adding enzyme</fullName>
    </alternativeName>
    <alternativeName>
        <fullName evidence="1">Meso-diaminopimelate-adding enzyme</fullName>
    </alternativeName>
    <alternativeName>
        <fullName evidence="1">UDP-MurNAc-L-Ala-D-Glu:meso-diaminopimelate ligase</fullName>
    </alternativeName>
    <alternativeName>
        <fullName evidence="1">UDP-MurNAc-tripeptide synthetase</fullName>
    </alternativeName>
    <alternativeName>
        <fullName evidence="1">UDP-N-acetylmuramyl-tripeptide synthetase</fullName>
    </alternativeName>
</protein>
<name>MURE_CLOPE</name>
<accession>Q8XJ99</accession>
<proteinExistence type="inferred from homology"/>
<feature type="chain" id="PRO_0000101887" description="UDP-N-acetylmuramoyl-L-alanyl-D-glutamate--2,6-diaminopimelate ligase">
    <location>
        <begin position="1"/>
        <end position="484"/>
    </location>
</feature>
<feature type="short sequence motif" description="Meso-diaminopimelate recognition motif">
    <location>
        <begin position="405"/>
        <end position="408"/>
    </location>
</feature>
<feature type="binding site" evidence="1">
    <location>
        <begin position="110"/>
        <end position="116"/>
    </location>
    <ligand>
        <name>ATP</name>
        <dbReference type="ChEBI" id="CHEBI:30616"/>
    </ligand>
</feature>
<feature type="binding site" evidence="1">
    <location>
        <begin position="152"/>
        <end position="153"/>
    </location>
    <ligand>
        <name>UDP-N-acetyl-alpha-D-muramoyl-L-alanyl-D-glutamate</name>
        <dbReference type="ChEBI" id="CHEBI:83900"/>
    </ligand>
</feature>
<feature type="binding site" evidence="1">
    <location>
        <position position="179"/>
    </location>
    <ligand>
        <name>UDP-N-acetyl-alpha-D-muramoyl-L-alanyl-D-glutamate</name>
        <dbReference type="ChEBI" id="CHEBI:83900"/>
    </ligand>
</feature>
<feature type="binding site" evidence="1">
    <location>
        <position position="187"/>
    </location>
    <ligand>
        <name>UDP-N-acetyl-alpha-D-muramoyl-L-alanyl-D-glutamate</name>
        <dbReference type="ChEBI" id="CHEBI:83900"/>
    </ligand>
</feature>
<feature type="binding site" evidence="1">
    <location>
        <position position="381"/>
    </location>
    <ligand>
        <name>meso-2,6-diaminopimelate</name>
        <dbReference type="ChEBI" id="CHEBI:57791"/>
    </ligand>
</feature>
<feature type="binding site" evidence="1">
    <location>
        <begin position="405"/>
        <end position="408"/>
    </location>
    <ligand>
        <name>meso-2,6-diaminopimelate</name>
        <dbReference type="ChEBI" id="CHEBI:57791"/>
    </ligand>
</feature>
<feature type="binding site" evidence="1">
    <location>
        <position position="455"/>
    </location>
    <ligand>
        <name>meso-2,6-diaminopimelate</name>
        <dbReference type="ChEBI" id="CHEBI:57791"/>
    </ligand>
</feature>
<feature type="binding site" evidence="1">
    <location>
        <position position="459"/>
    </location>
    <ligand>
        <name>meso-2,6-diaminopimelate</name>
        <dbReference type="ChEBI" id="CHEBI:57791"/>
    </ligand>
</feature>
<feature type="modified residue" description="N6-carboxylysine" evidence="1">
    <location>
        <position position="219"/>
    </location>
</feature>
<keyword id="KW-0067">ATP-binding</keyword>
<keyword id="KW-0131">Cell cycle</keyword>
<keyword id="KW-0132">Cell division</keyword>
<keyword id="KW-0133">Cell shape</keyword>
<keyword id="KW-0961">Cell wall biogenesis/degradation</keyword>
<keyword id="KW-0963">Cytoplasm</keyword>
<keyword id="KW-0436">Ligase</keyword>
<keyword id="KW-0460">Magnesium</keyword>
<keyword id="KW-0547">Nucleotide-binding</keyword>
<keyword id="KW-0573">Peptidoglycan synthesis</keyword>
<keyword id="KW-1185">Reference proteome</keyword>
<dbReference type="EC" id="6.3.2.13" evidence="1"/>
<dbReference type="EMBL" id="BA000016">
    <property type="protein sequence ID" value="BAB81568.1"/>
    <property type="molecule type" value="Genomic_DNA"/>
</dbReference>
<dbReference type="RefSeq" id="WP_011010644.1">
    <property type="nucleotide sequence ID" value="NC_003366.1"/>
</dbReference>
<dbReference type="SMR" id="Q8XJ99"/>
<dbReference type="STRING" id="195102.gene:10491126"/>
<dbReference type="KEGG" id="cpe:CPE1862"/>
<dbReference type="HOGENOM" id="CLU_022291_4_1_9"/>
<dbReference type="UniPathway" id="UPA00219"/>
<dbReference type="Proteomes" id="UP000000818">
    <property type="component" value="Chromosome"/>
</dbReference>
<dbReference type="GO" id="GO:0005737">
    <property type="term" value="C:cytoplasm"/>
    <property type="evidence" value="ECO:0007669"/>
    <property type="project" value="UniProtKB-SubCell"/>
</dbReference>
<dbReference type="GO" id="GO:0005524">
    <property type="term" value="F:ATP binding"/>
    <property type="evidence" value="ECO:0007669"/>
    <property type="project" value="UniProtKB-UniRule"/>
</dbReference>
<dbReference type="GO" id="GO:0000287">
    <property type="term" value="F:magnesium ion binding"/>
    <property type="evidence" value="ECO:0007669"/>
    <property type="project" value="UniProtKB-UniRule"/>
</dbReference>
<dbReference type="GO" id="GO:0004326">
    <property type="term" value="F:tetrahydrofolylpolyglutamate synthase activity"/>
    <property type="evidence" value="ECO:0007669"/>
    <property type="project" value="InterPro"/>
</dbReference>
<dbReference type="GO" id="GO:0008765">
    <property type="term" value="F:UDP-N-acetylmuramoylalanyl-D-glutamate-2,6-diaminopimelate ligase activity"/>
    <property type="evidence" value="ECO:0007669"/>
    <property type="project" value="UniProtKB-UniRule"/>
</dbReference>
<dbReference type="GO" id="GO:0051301">
    <property type="term" value="P:cell division"/>
    <property type="evidence" value="ECO:0007669"/>
    <property type="project" value="UniProtKB-KW"/>
</dbReference>
<dbReference type="GO" id="GO:0071555">
    <property type="term" value="P:cell wall organization"/>
    <property type="evidence" value="ECO:0007669"/>
    <property type="project" value="UniProtKB-KW"/>
</dbReference>
<dbReference type="GO" id="GO:0009252">
    <property type="term" value="P:peptidoglycan biosynthetic process"/>
    <property type="evidence" value="ECO:0007669"/>
    <property type="project" value="UniProtKB-UniRule"/>
</dbReference>
<dbReference type="GO" id="GO:0008360">
    <property type="term" value="P:regulation of cell shape"/>
    <property type="evidence" value="ECO:0007669"/>
    <property type="project" value="UniProtKB-KW"/>
</dbReference>
<dbReference type="Gene3D" id="3.90.190.20">
    <property type="entry name" value="Mur ligase, C-terminal domain"/>
    <property type="match status" value="1"/>
</dbReference>
<dbReference type="Gene3D" id="3.40.1190.10">
    <property type="entry name" value="Mur-like, catalytic domain"/>
    <property type="match status" value="1"/>
</dbReference>
<dbReference type="Gene3D" id="3.40.1390.10">
    <property type="entry name" value="MurE/MurF, N-terminal domain"/>
    <property type="match status" value="1"/>
</dbReference>
<dbReference type="HAMAP" id="MF_00208">
    <property type="entry name" value="MurE"/>
    <property type="match status" value="1"/>
</dbReference>
<dbReference type="InterPro" id="IPR018109">
    <property type="entry name" value="Folylpolyglutamate_synth_CS"/>
</dbReference>
<dbReference type="InterPro" id="IPR036565">
    <property type="entry name" value="Mur-like_cat_sf"/>
</dbReference>
<dbReference type="InterPro" id="IPR004101">
    <property type="entry name" value="Mur_ligase_C"/>
</dbReference>
<dbReference type="InterPro" id="IPR036615">
    <property type="entry name" value="Mur_ligase_C_dom_sf"/>
</dbReference>
<dbReference type="InterPro" id="IPR013221">
    <property type="entry name" value="Mur_ligase_cen"/>
</dbReference>
<dbReference type="InterPro" id="IPR000713">
    <property type="entry name" value="Mur_ligase_N"/>
</dbReference>
<dbReference type="InterPro" id="IPR035911">
    <property type="entry name" value="MurE/MurF_N"/>
</dbReference>
<dbReference type="InterPro" id="IPR005761">
    <property type="entry name" value="UDP-N-AcMur-Glu-dNH2Pim_ligase"/>
</dbReference>
<dbReference type="NCBIfam" id="TIGR01085">
    <property type="entry name" value="murE"/>
    <property type="match status" value="1"/>
</dbReference>
<dbReference type="NCBIfam" id="NF001124">
    <property type="entry name" value="PRK00139.1-2"/>
    <property type="match status" value="1"/>
</dbReference>
<dbReference type="NCBIfam" id="NF001126">
    <property type="entry name" value="PRK00139.1-4"/>
    <property type="match status" value="1"/>
</dbReference>
<dbReference type="PANTHER" id="PTHR23135">
    <property type="entry name" value="MUR LIGASE FAMILY MEMBER"/>
    <property type="match status" value="1"/>
</dbReference>
<dbReference type="PANTHER" id="PTHR23135:SF4">
    <property type="entry name" value="UDP-N-ACETYLMURAMOYL-L-ALANYL-D-GLUTAMATE--2,6-DIAMINOPIMELATE LIGASE MURE HOMOLOG, CHLOROPLASTIC"/>
    <property type="match status" value="1"/>
</dbReference>
<dbReference type="Pfam" id="PF01225">
    <property type="entry name" value="Mur_ligase"/>
    <property type="match status" value="1"/>
</dbReference>
<dbReference type="Pfam" id="PF02875">
    <property type="entry name" value="Mur_ligase_C"/>
    <property type="match status" value="1"/>
</dbReference>
<dbReference type="Pfam" id="PF08245">
    <property type="entry name" value="Mur_ligase_M"/>
    <property type="match status" value="1"/>
</dbReference>
<dbReference type="SUPFAM" id="SSF53623">
    <property type="entry name" value="MurD-like peptide ligases, catalytic domain"/>
    <property type="match status" value="1"/>
</dbReference>
<dbReference type="SUPFAM" id="SSF53244">
    <property type="entry name" value="MurD-like peptide ligases, peptide-binding domain"/>
    <property type="match status" value="1"/>
</dbReference>
<dbReference type="SUPFAM" id="SSF63418">
    <property type="entry name" value="MurE/MurF N-terminal domain"/>
    <property type="match status" value="1"/>
</dbReference>
<organism>
    <name type="scientific">Clostridium perfringens (strain 13 / Type A)</name>
    <dbReference type="NCBI Taxonomy" id="195102"/>
    <lineage>
        <taxon>Bacteria</taxon>
        <taxon>Bacillati</taxon>
        <taxon>Bacillota</taxon>
        <taxon>Clostridia</taxon>
        <taxon>Eubacteriales</taxon>
        <taxon>Clostridiaceae</taxon>
        <taxon>Clostridium</taxon>
    </lineage>
</organism>
<sequence>MILKSLLKGLDYEVIKGNEESKVQNIRYDNRKIEQGDAFVCVKGFKVDGHSFIGDAIKKGAKTLIVQEDVSVQEDITIIKVRDTRKALAIMSSNYFGNPKDKLKIIGITGTNGKTTSAFIIKSILEKAGFMTGLIGTIANYIGNKKVDAVRTTPESYELHELFKNMVDAGVEYCVMEVSSHSLELDRVYGIQFEEGIFTNLTRDHLDFHKTFENYYNAKFKLFERSNHSIINLDDPYGANIVKDIEERGVKTKVSTFSIEKESDFKAFEIKSHSNGSEFKVNLEGIEEFSINIPGEYNIYNSLGCIICAYNLNIPMDKIKEGLSDVVIPGRCELVAKEKNLPYSIIIDYAHTPDGLENILSTVKAFTKNRMISVFGCGGDRDKVKRPQMGKIGCELSDIAIITSDNPRSEEPMDIINDIVKPLNYDNFVIEVNRKEAIRKAMNMALEGDVIVIAGKGHETYQILKDETIHFDEREVVYDILEGK</sequence>
<evidence type="ECO:0000255" key="1">
    <source>
        <dbReference type="HAMAP-Rule" id="MF_00208"/>
    </source>
</evidence>
<gene>
    <name evidence="1" type="primary">murE</name>
    <name type="ordered locus">CPE1862</name>
</gene>
<comment type="function">
    <text evidence="1">Catalyzes the addition of meso-diaminopimelic acid to the nucleotide precursor UDP-N-acetylmuramoyl-L-alanyl-D-glutamate (UMAG) in the biosynthesis of bacterial cell-wall peptidoglycan.</text>
</comment>
<comment type="catalytic activity">
    <reaction evidence="1">
        <text>UDP-N-acetyl-alpha-D-muramoyl-L-alanyl-D-glutamate + meso-2,6-diaminopimelate + ATP = UDP-N-acetyl-alpha-D-muramoyl-L-alanyl-gamma-D-glutamyl-meso-2,6-diaminopimelate + ADP + phosphate + H(+)</text>
        <dbReference type="Rhea" id="RHEA:23676"/>
        <dbReference type="ChEBI" id="CHEBI:15378"/>
        <dbReference type="ChEBI" id="CHEBI:30616"/>
        <dbReference type="ChEBI" id="CHEBI:43474"/>
        <dbReference type="ChEBI" id="CHEBI:57791"/>
        <dbReference type="ChEBI" id="CHEBI:83900"/>
        <dbReference type="ChEBI" id="CHEBI:83905"/>
        <dbReference type="ChEBI" id="CHEBI:456216"/>
        <dbReference type="EC" id="6.3.2.13"/>
    </reaction>
</comment>
<comment type="cofactor">
    <cofactor evidence="1">
        <name>Mg(2+)</name>
        <dbReference type="ChEBI" id="CHEBI:18420"/>
    </cofactor>
</comment>
<comment type="pathway">
    <text evidence="1">Cell wall biogenesis; peptidoglycan biosynthesis.</text>
</comment>
<comment type="subcellular location">
    <subcellularLocation>
        <location evidence="1">Cytoplasm</location>
    </subcellularLocation>
</comment>
<comment type="PTM">
    <text evidence="1">Carboxylation is probably crucial for Mg(2+) binding and, consequently, for the gamma-phosphate positioning of ATP.</text>
</comment>
<comment type="similarity">
    <text evidence="1">Belongs to the MurCDEF family. MurE subfamily.</text>
</comment>